<proteinExistence type="inferred from homology"/>
<dbReference type="EMBL" id="CP000915">
    <property type="protein sequence ID" value="ACD30931.1"/>
    <property type="molecule type" value="Genomic_DNA"/>
</dbReference>
<dbReference type="SMR" id="B2SGS1"/>
<dbReference type="KEGG" id="ftm:FTM_1016"/>
<dbReference type="HOGENOM" id="CLU_169643_1_1_6"/>
<dbReference type="GO" id="GO:0022625">
    <property type="term" value="C:cytosolic large ribosomal subunit"/>
    <property type="evidence" value="ECO:0007669"/>
    <property type="project" value="TreeGrafter"/>
</dbReference>
<dbReference type="GO" id="GO:0003735">
    <property type="term" value="F:structural constituent of ribosome"/>
    <property type="evidence" value="ECO:0007669"/>
    <property type="project" value="InterPro"/>
</dbReference>
<dbReference type="GO" id="GO:0006412">
    <property type="term" value="P:translation"/>
    <property type="evidence" value="ECO:0007669"/>
    <property type="project" value="UniProtKB-UniRule"/>
</dbReference>
<dbReference type="FunFam" id="4.10.410.60:FF:000001">
    <property type="entry name" value="50S ribosomal protein L35"/>
    <property type="match status" value="1"/>
</dbReference>
<dbReference type="Gene3D" id="4.10.410.60">
    <property type="match status" value="1"/>
</dbReference>
<dbReference type="HAMAP" id="MF_00514">
    <property type="entry name" value="Ribosomal_bL35"/>
    <property type="match status" value="1"/>
</dbReference>
<dbReference type="InterPro" id="IPR001706">
    <property type="entry name" value="Ribosomal_bL35"/>
</dbReference>
<dbReference type="InterPro" id="IPR021137">
    <property type="entry name" value="Ribosomal_bL35-like"/>
</dbReference>
<dbReference type="InterPro" id="IPR018265">
    <property type="entry name" value="Ribosomal_bL35_CS"/>
</dbReference>
<dbReference type="InterPro" id="IPR037229">
    <property type="entry name" value="Ribosomal_bL35_sf"/>
</dbReference>
<dbReference type="NCBIfam" id="TIGR00001">
    <property type="entry name" value="rpmI_bact"/>
    <property type="match status" value="1"/>
</dbReference>
<dbReference type="PANTHER" id="PTHR33343">
    <property type="entry name" value="54S RIBOSOMAL PROTEIN BL35M"/>
    <property type="match status" value="1"/>
</dbReference>
<dbReference type="PANTHER" id="PTHR33343:SF1">
    <property type="entry name" value="LARGE RIBOSOMAL SUBUNIT PROTEIN BL35M"/>
    <property type="match status" value="1"/>
</dbReference>
<dbReference type="Pfam" id="PF01632">
    <property type="entry name" value="Ribosomal_L35p"/>
    <property type="match status" value="1"/>
</dbReference>
<dbReference type="PRINTS" id="PR00064">
    <property type="entry name" value="RIBOSOMALL35"/>
</dbReference>
<dbReference type="SUPFAM" id="SSF143034">
    <property type="entry name" value="L35p-like"/>
    <property type="match status" value="1"/>
</dbReference>
<dbReference type="PROSITE" id="PS00936">
    <property type="entry name" value="RIBOSOMAL_L35"/>
    <property type="match status" value="1"/>
</dbReference>
<gene>
    <name evidence="1" type="primary">rpmI</name>
    <name type="ordered locus">FTM_1016</name>
</gene>
<feature type="chain" id="PRO_1000127357" description="Large ribosomal subunit protein bL35">
    <location>
        <begin position="1"/>
        <end position="65"/>
    </location>
</feature>
<feature type="region of interest" description="Disordered" evidence="2">
    <location>
        <begin position="1"/>
        <end position="23"/>
    </location>
</feature>
<feature type="region of interest" description="Disordered" evidence="2">
    <location>
        <begin position="36"/>
        <end position="65"/>
    </location>
</feature>
<feature type="compositionally biased region" description="Polar residues" evidence="2">
    <location>
        <begin position="54"/>
        <end position="65"/>
    </location>
</feature>
<comment type="similarity">
    <text evidence="1">Belongs to the bacterial ribosomal protein bL35 family.</text>
</comment>
<evidence type="ECO:0000255" key="1">
    <source>
        <dbReference type="HAMAP-Rule" id="MF_00514"/>
    </source>
</evidence>
<evidence type="ECO:0000256" key="2">
    <source>
        <dbReference type="SAM" id="MobiDB-lite"/>
    </source>
</evidence>
<evidence type="ECO:0000305" key="3"/>
<sequence length="65" mass="7370">MPKLKTKSGAAKRFKKTGKGGFKHRCANRAHINTKMTTKRKRHLRGMNQVAKVDTTSLVQQMPYA</sequence>
<accession>B2SGS1</accession>
<name>RL35_FRATM</name>
<organism>
    <name type="scientific">Francisella tularensis subsp. mediasiatica (strain FSC147)</name>
    <dbReference type="NCBI Taxonomy" id="441952"/>
    <lineage>
        <taxon>Bacteria</taxon>
        <taxon>Pseudomonadati</taxon>
        <taxon>Pseudomonadota</taxon>
        <taxon>Gammaproteobacteria</taxon>
        <taxon>Thiotrichales</taxon>
        <taxon>Francisellaceae</taxon>
        <taxon>Francisella</taxon>
    </lineage>
</organism>
<protein>
    <recommendedName>
        <fullName evidence="1">Large ribosomal subunit protein bL35</fullName>
    </recommendedName>
    <alternativeName>
        <fullName evidence="3">50S ribosomal protein L35</fullName>
    </alternativeName>
</protein>
<keyword id="KW-0687">Ribonucleoprotein</keyword>
<keyword id="KW-0689">Ribosomal protein</keyword>
<reference key="1">
    <citation type="journal article" date="2009" name="PLoS Pathog.">
        <title>Molecular evolutionary consequences of niche restriction in Francisella tularensis, a facultative intracellular pathogen.</title>
        <authorList>
            <person name="Larsson P."/>
            <person name="Elfsmark D."/>
            <person name="Svensson K."/>
            <person name="Wikstroem P."/>
            <person name="Forsman M."/>
            <person name="Brettin T."/>
            <person name="Keim P."/>
            <person name="Johansson A."/>
        </authorList>
    </citation>
    <scope>NUCLEOTIDE SEQUENCE [LARGE SCALE GENOMIC DNA]</scope>
    <source>
        <strain>FSC147</strain>
    </source>
</reference>